<dbReference type="EMBL" id="D14422">
    <property type="protein sequence ID" value="BAA03314.1"/>
    <property type="molecule type" value="Genomic_DNA"/>
</dbReference>
<dbReference type="EMBL" id="U29579">
    <property type="protein sequence ID" value="AAA69223.1"/>
    <property type="molecule type" value="Genomic_DNA"/>
</dbReference>
<dbReference type="EMBL" id="U00096">
    <property type="protein sequence ID" value="AAC75755.1"/>
    <property type="molecule type" value="Genomic_DNA"/>
</dbReference>
<dbReference type="EMBL" id="AP009048">
    <property type="protein sequence ID" value="BAE76790.1"/>
    <property type="molecule type" value="Genomic_DNA"/>
</dbReference>
<dbReference type="PIR" id="E65051">
    <property type="entry name" value="E65051"/>
</dbReference>
<dbReference type="RefSeq" id="NP_417193.1">
    <property type="nucleotide sequence ID" value="NC_000913.3"/>
</dbReference>
<dbReference type="RefSeq" id="WP_001078777.1">
    <property type="nucleotide sequence ID" value="NZ_STEB01000027.1"/>
</dbReference>
<dbReference type="SMR" id="P0AAK4"/>
<dbReference type="BioGRID" id="4259425">
    <property type="interactions" value="22"/>
</dbReference>
<dbReference type="BioGRID" id="851522">
    <property type="interactions" value="11"/>
</dbReference>
<dbReference type="FunCoup" id="P0AAK4">
    <property type="interactions" value="23"/>
</dbReference>
<dbReference type="IntAct" id="P0AAK4">
    <property type="interactions" value="13"/>
</dbReference>
<dbReference type="STRING" id="511145.b2713"/>
<dbReference type="PaxDb" id="511145-b2713"/>
<dbReference type="EnsemblBacteria" id="AAC75755">
    <property type="protein sequence ID" value="AAC75755"/>
    <property type="gene ID" value="b2713"/>
</dbReference>
<dbReference type="GeneID" id="93779298"/>
<dbReference type="GeneID" id="947190"/>
<dbReference type="KEGG" id="ecj:JW2683"/>
<dbReference type="KEGG" id="eco:b2713"/>
<dbReference type="KEGG" id="ecoc:C3026_14930"/>
<dbReference type="PATRIC" id="fig|1411691.4.peg.4029"/>
<dbReference type="EchoBASE" id="EB1513"/>
<dbReference type="eggNOG" id="COG1142">
    <property type="taxonomic scope" value="Bacteria"/>
</dbReference>
<dbReference type="HOGENOM" id="CLU_043374_3_0_6"/>
<dbReference type="InParanoid" id="P0AAK4"/>
<dbReference type="OMA" id="DNCGDCV"/>
<dbReference type="OrthoDB" id="9779457at2"/>
<dbReference type="PhylomeDB" id="P0AAK4"/>
<dbReference type="BioCyc" id="EcoCyc:EG11552-MONOMER"/>
<dbReference type="PRO" id="PR:P0AAK4"/>
<dbReference type="Proteomes" id="UP000000625">
    <property type="component" value="Chromosome"/>
</dbReference>
<dbReference type="GO" id="GO:0051539">
    <property type="term" value="F:4 iron, 4 sulfur cluster binding"/>
    <property type="evidence" value="ECO:0007669"/>
    <property type="project" value="UniProtKB-KW"/>
</dbReference>
<dbReference type="GO" id="GO:0009055">
    <property type="term" value="F:electron transfer activity"/>
    <property type="evidence" value="ECO:0000315"/>
    <property type="project" value="EcoCyc"/>
</dbReference>
<dbReference type="GO" id="GO:0046872">
    <property type="term" value="F:metal ion binding"/>
    <property type="evidence" value="ECO:0007669"/>
    <property type="project" value="UniProtKB-KW"/>
</dbReference>
<dbReference type="CDD" id="cd10554">
    <property type="entry name" value="HycB_like"/>
    <property type="match status" value="1"/>
</dbReference>
<dbReference type="FunFam" id="3.30.70.20:FF:000027">
    <property type="entry name" value="Electron transport protein hydN"/>
    <property type="match status" value="1"/>
</dbReference>
<dbReference type="Gene3D" id="3.30.70.20">
    <property type="match status" value="2"/>
</dbReference>
<dbReference type="InterPro" id="IPR017896">
    <property type="entry name" value="4Fe4S_Fe-S-bd"/>
</dbReference>
<dbReference type="InterPro" id="IPR017900">
    <property type="entry name" value="4Fe4S_Fe_S_CS"/>
</dbReference>
<dbReference type="InterPro" id="IPR050294">
    <property type="entry name" value="RnfB_subfamily"/>
</dbReference>
<dbReference type="NCBIfam" id="NF007658">
    <property type="entry name" value="PRK10330.1"/>
    <property type="match status" value="1"/>
</dbReference>
<dbReference type="PANTHER" id="PTHR42859:SF17">
    <property type="entry name" value="ELECTRON TRANSPORT PROTEIN HYDN-RELATED"/>
    <property type="match status" value="1"/>
</dbReference>
<dbReference type="PANTHER" id="PTHR42859">
    <property type="entry name" value="OXIDOREDUCTASE"/>
    <property type="match status" value="1"/>
</dbReference>
<dbReference type="Pfam" id="PF13247">
    <property type="entry name" value="Fer4_11"/>
    <property type="match status" value="1"/>
</dbReference>
<dbReference type="Pfam" id="PF12800">
    <property type="entry name" value="Fer4_4"/>
    <property type="match status" value="1"/>
</dbReference>
<dbReference type="SUPFAM" id="SSF54862">
    <property type="entry name" value="4Fe-4S ferredoxins"/>
    <property type="match status" value="1"/>
</dbReference>
<dbReference type="PROSITE" id="PS00198">
    <property type="entry name" value="4FE4S_FER_1"/>
    <property type="match status" value="1"/>
</dbReference>
<dbReference type="PROSITE" id="PS51379">
    <property type="entry name" value="4FE4S_FER_2"/>
    <property type="match status" value="4"/>
</dbReference>
<gene>
    <name type="primary">hydN</name>
    <name type="ordered locus">b2713</name>
    <name type="ordered locus">JW2683</name>
</gene>
<keyword id="KW-0004">4Fe-4S</keyword>
<keyword id="KW-0249">Electron transport</keyword>
<keyword id="KW-0408">Iron</keyword>
<keyword id="KW-0411">Iron-sulfur</keyword>
<keyword id="KW-0479">Metal-binding</keyword>
<keyword id="KW-1185">Reference proteome</keyword>
<keyword id="KW-0677">Repeat</keyword>
<keyword id="KW-0813">Transport</keyword>
<evidence type="ECO:0000250" key="1"/>
<evidence type="ECO:0000255" key="2">
    <source>
        <dbReference type="PROSITE-ProRule" id="PRU00711"/>
    </source>
</evidence>
<evidence type="ECO:0000269" key="3">
    <source>
    </source>
</evidence>
<protein>
    <recommendedName>
        <fullName>Electron transport protein HydN</fullName>
    </recommendedName>
</protein>
<sequence length="175" mass="19026">MNRFIIADASKCIGCRTCEVACVVSHQENQDCASLTPETFLPRIHVIKGVNISTATVCRQCEDAPCANVCPNGAISRDKGFVHVMQERCIGCKTCVVACPYGAMEVVVRPVIRNSGAGLNVRADKAEANKCDLCNHREDGPACMAACPTHALICVDRNKLEQLSAEKRRRTALMF</sequence>
<proteinExistence type="inferred from homology"/>
<feature type="chain" id="PRO_0000159269" description="Electron transport protein HydN">
    <location>
        <begin position="1"/>
        <end position="175"/>
    </location>
</feature>
<feature type="domain" description="4Fe-4S ferredoxin-type 1" evidence="2">
    <location>
        <begin position="2"/>
        <end position="32"/>
    </location>
</feature>
<feature type="domain" description="4Fe-4S ferredoxin-type 2" evidence="2">
    <location>
        <begin position="48"/>
        <end position="79"/>
    </location>
</feature>
<feature type="domain" description="4Fe-4S ferredoxin-type 3" evidence="2">
    <location>
        <begin position="80"/>
        <end position="109"/>
    </location>
</feature>
<feature type="domain" description="4Fe-4S ferredoxin-type 4" evidence="2">
    <location>
        <begin position="124"/>
        <end position="157"/>
    </location>
</feature>
<feature type="binding site" evidence="1">
    <location>
        <position position="12"/>
    </location>
    <ligand>
        <name>[4Fe-4S] cluster</name>
        <dbReference type="ChEBI" id="CHEBI:49883"/>
        <label>1</label>
    </ligand>
</feature>
<feature type="binding site" evidence="1">
    <location>
        <position position="15"/>
    </location>
    <ligand>
        <name>[4Fe-4S] cluster</name>
        <dbReference type="ChEBI" id="CHEBI:49883"/>
        <label>1</label>
    </ligand>
</feature>
<feature type="binding site" evidence="1">
    <location>
        <position position="18"/>
    </location>
    <ligand>
        <name>[4Fe-4S] cluster</name>
        <dbReference type="ChEBI" id="CHEBI:49883"/>
        <label>1</label>
    </ligand>
</feature>
<feature type="binding site" evidence="1">
    <location>
        <position position="22"/>
    </location>
    <ligand>
        <name>[4Fe-4S] cluster</name>
        <dbReference type="ChEBI" id="CHEBI:49883"/>
        <label>2</label>
    </ligand>
</feature>
<feature type="binding site" evidence="1">
    <location>
        <position position="58"/>
    </location>
    <ligand>
        <name>[4Fe-4S] cluster</name>
        <dbReference type="ChEBI" id="CHEBI:49883"/>
        <label>3</label>
    </ligand>
</feature>
<feature type="binding site" evidence="1">
    <location>
        <position position="61"/>
    </location>
    <ligand>
        <name>[4Fe-4S] cluster</name>
        <dbReference type="ChEBI" id="CHEBI:49883"/>
        <label>3</label>
    </ligand>
</feature>
<feature type="binding site" evidence="1">
    <location>
        <position position="66"/>
    </location>
    <ligand>
        <name>[4Fe-4S] cluster</name>
        <dbReference type="ChEBI" id="CHEBI:49883"/>
        <label>3</label>
    </ligand>
</feature>
<feature type="binding site" evidence="1">
    <location>
        <position position="70"/>
    </location>
    <ligand>
        <name>[4Fe-4S] cluster</name>
        <dbReference type="ChEBI" id="CHEBI:49883"/>
        <label>4</label>
    </ligand>
</feature>
<feature type="binding site" evidence="1">
    <location>
        <position position="89"/>
    </location>
    <ligand>
        <name>[4Fe-4S] cluster</name>
        <dbReference type="ChEBI" id="CHEBI:49883"/>
        <label>4</label>
    </ligand>
</feature>
<feature type="binding site" evidence="1">
    <location>
        <position position="92"/>
    </location>
    <ligand>
        <name>[4Fe-4S] cluster</name>
        <dbReference type="ChEBI" id="CHEBI:49883"/>
        <label>4</label>
    </ligand>
</feature>
<feature type="binding site" evidence="1">
    <location>
        <position position="95"/>
    </location>
    <ligand>
        <name>[4Fe-4S] cluster</name>
        <dbReference type="ChEBI" id="CHEBI:49883"/>
        <label>4</label>
    </ligand>
</feature>
<feature type="binding site" evidence="1">
    <location>
        <position position="99"/>
    </location>
    <ligand>
        <name>[4Fe-4S] cluster</name>
        <dbReference type="ChEBI" id="CHEBI:49883"/>
        <label>3</label>
    </ligand>
</feature>
<feature type="binding site" evidence="1">
    <location>
        <position position="131"/>
    </location>
    <ligand>
        <name>[4Fe-4S] cluster</name>
        <dbReference type="ChEBI" id="CHEBI:49883"/>
        <label>2</label>
    </ligand>
</feature>
<feature type="binding site" evidence="1">
    <location>
        <position position="134"/>
    </location>
    <ligand>
        <name>[4Fe-4S] cluster</name>
        <dbReference type="ChEBI" id="CHEBI:49883"/>
        <label>2</label>
    </ligand>
</feature>
<feature type="binding site" evidence="1">
    <location>
        <position position="143"/>
    </location>
    <ligand>
        <name>[4Fe-4S] cluster</name>
        <dbReference type="ChEBI" id="CHEBI:49883"/>
        <label>2</label>
    </ligand>
</feature>
<feature type="binding site" evidence="1">
    <location>
        <position position="147"/>
    </location>
    <ligand>
        <name>[4Fe-4S] cluster</name>
        <dbReference type="ChEBI" id="CHEBI:49883"/>
        <label>1</label>
    </ligand>
</feature>
<name>HYDN_ECOLI</name>
<accession>P0AAK4</accession>
<accession>P30132</accession>
<accession>Q2MAB6</accession>
<reference key="1">
    <citation type="submission" date="1993-02" db="EMBL/GenBank/DDBJ databases">
        <authorList>
            <person name="Ikebukuro K."/>
            <person name="Nishio M."/>
            <person name="Yano K."/>
            <person name="Tomiyama M."/>
            <person name="Tamiya E."/>
            <person name="Karube I."/>
        </authorList>
    </citation>
    <scope>NUCLEOTIDE SEQUENCE [GENOMIC DNA]</scope>
    <source>
        <strain>K12</strain>
    </source>
</reference>
<reference key="2">
    <citation type="journal article" date="1997" name="Science">
        <title>The complete genome sequence of Escherichia coli K-12.</title>
        <authorList>
            <person name="Blattner F.R."/>
            <person name="Plunkett G. III"/>
            <person name="Bloch C.A."/>
            <person name="Perna N.T."/>
            <person name="Burland V."/>
            <person name="Riley M."/>
            <person name="Collado-Vides J."/>
            <person name="Glasner J.D."/>
            <person name="Rode C.K."/>
            <person name="Mayhew G.F."/>
            <person name="Gregor J."/>
            <person name="Davis N.W."/>
            <person name="Kirkpatrick H.A."/>
            <person name="Goeden M.A."/>
            <person name="Rose D.J."/>
            <person name="Mau B."/>
            <person name="Shao Y."/>
        </authorList>
    </citation>
    <scope>NUCLEOTIDE SEQUENCE [LARGE SCALE GENOMIC DNA]</scope>
    <source>
        <strain>K12 / MG1655 / ATCC 47076</strain>
    </source>
</reference>
<reference key="3">
    <citation type="journal article" date="2006" name="Mol. Syst. Biol.">
        <title>Highly accurate genome sequences of Escherichia coli K-12 strains MG1655 and W3110.</title>
        <authorList>
            <person name="Hayashi K."/>
            <person name="Morooka N."/>
            <person name="Yamamoto Y."/>
            <person name="Fujita K."/>
            <person name="Isono K."/>
            <person name="Choi S."/>
            <person name="Ohtsubo E."/>
            <person name="Baba T."/>
            <person name="Wanner B.L."/>
            <person name="Mori H."/>
            <person name="Horiuchi T."/>
        </authorList>
    </citation>
    <scope>NUCLEOTIDE SEQUENCE [LARGE SCALE GENOMIC DNA]</scope>
    <source>
        <strain>K12 / W3110 / ATCC 27325 / DSM 5911</strain>
    </source>
</reference>
<reference key="4">
    <citation type="journal article" date="1996" name="Arch. Microbiol.">
        <title>Analysis of the hydA locus of Escherichia coli: two genes (hydN and hypF) involved in formate and hydrogen metabolism.</title>
        <authorList>
            <person name="Maier T."/>
            <person name="Binder U."/>
            <person name="Boeck A."/>
        </authorList>
    </citation>
    <scope>FUNCTION</scope>
</reference>
<comment type="function">
    <text evidence="3">Electron transport from formate to hydrogen.</text>
</comment>
<comment type="cofactor">
    <cofactor evidence="1">
        <name>[4Fe-4S] cluster</name>
        <dbReference type="ChEBI" id="CHEBI:49883"/>
    </cofactor>
    <text evidence="1">Binds 4 [4Fe-4S] clusters.</text>
</comment>
<organism>
    <name type="scientific">Escherichia coli (strain K12)</name>
    <dbReference type="NCBI Taxonomy" id="83333"/>
    <lineage>
        <taxon>Bacteria</taxon>
        <taxon>Pseudomonadati</taxon>
        <taxon>Pseudomonadota</taxon>
        <taxon>Gammaproteobacteria</taxon>
        <taxon>Enterobacterales</taxon>
        <taxon>Enterobacteriaceae</taxon>
        <taxon>Escherichia</taxon>
    </lineage>
</organism>